<protein>
    <recommendedName>
        <fullName evidence="1">Large ribosomal subunit protein uL24</fullName>
    </recommendedName>
    <alternativeName>
        <fullName evidence="2">50S ribosomal protein L24</fullName>
    </alternativeName>
</protein>
<sequence>MNRLKKGDDVIVIAGKDKGRRGVVKSFAKGGSLVLVEGINIVKKHIKPNPNRGIEDGVVEKELPVDASNVAIFNPATEKADRVGYKFVDEKKVRYFKSNGELVDL</sequence>
<reference key="1">
    <citation type="journal article" date="2005" name="Nat. Genet.">
        <title>The complete genome sequence of Francisella tularensis, the causative agent of tularemia.</title>
        <authorList>
            <person name="Larsson P."/>
            <person name="Oyston P.C.F."/>
            <person name="Chain P."/>
            <person name="Chu M.C."/>
            <person name="Duffield M."/>
            <person name="Fuxelius H.-H."/>
            <person name="Garcia E."/>
            <person name="Haelltorp G."/>
            <person name="Johansson D."/>
            <person name="Isherwood K.E."/>
            <person name="Karp P.D."/>
            <person name="Larsson E."/>
            <person name="Liu Y."/>
            <person name="Michell S."/>
            <person name="Prior J."/>
            <person name="Prior R."/>
            <person name="Malfatti S."/>
            <person name="Sjoestedt A."/>
            <person name="Svensson K."/>
            <person name="Thompson N."/>
            <person name="Vergez L."/>
            <person name="Wagg J.K."/>
            <person name="Wren B.W."/>
            <person name="Lindler L.E."/>
            <person name="Andersson S.G.E."/>
            <person name="Forsman M."/>
            <person name="Titball R.W."/>
        </authorList>
    </citation>
    <scope>NUCLEOTIDE SEQUENCE [LARGE SCALE GENOMIC DNA]</scope>
    <source>
        <strain>SCHU S4 / Schu 4</strain>
    </source>
</reference>
<proteinExistence type="inferred from homology"/>
<evidence type="ECO:0000255" key="1">
    <source>
        <dbReference type="HAMAP-Rule" id="MF_01326"/>
    </source>
</evidence>
<evidence type="ECO:0000305" key="2"/>
<comment type="function">
    <text evidence="1">One of two assembly initiator proteins, it binds directly to the 5'-end of the 23S rRNA, where it nucleates assembly of the 50S subunit.</text>
</comment>
<comment type="function">
    <text evidence="1">One of the proteins that surrounds the polypeptide exit tunnel on the outside of the subunit.</text>
</comment>
<comment type="subunit">
    <text evidence="1">Part of the 50S ribosomal subunit.</text>
</comment>
<comment type="similarity">
    <text evidence="1">Belongs to the universal ribosomal protein uL24 family.</text>
</comment>
<accession>Q5NHV7</accession>
<feature type="chain" id="PRO_0000241601" description="Large ribosomal subunit protein uL24">
    <location>
        <begin position="1"/>
        <end position="105"/>
    </location>
</feature>
<dbReference type="EMBL" id="AJ749949">
    <property type="protein sequence ID" value="CAG44969.1"/>
    <property type="molecule type" value="Genomic_DNA"/>
</dbReference>
<dbReference type="RefSeq" id="WP_003021594.1">
    <property type="nucleotide sequence ID" value="NZ_CP010290.1"/>
</dbReference>
<dbReference type="RefSeq" id="YP_169385.1">
    <property type="nucleotide sequence ID" value="NC_006570.2"/>
</dbReference>
<dbReference type="SMR" id="Q5NHV7"/>
<dbReference type="STRING" id="177416.FTT_0336"/>
<dbReference type="DNASU" id="3191998"/>
<dbReference type="EnsemblBacteria" id="CAG44969">
    <property type="protein sequence ID" value="CAG44969"/>
    <property type="gene ID" value="FTT_0336"/>
</dbReference>
<dbReference type="KEGG" id="ftu:FTT_0336"/>
<dbReference type="eggNOG" id="COG0198">
    <property type="taxonomic scope" value="Bacteria"/>
</dbReference>
<dbReference type="OrthoDB" id="9807419at2"/>
<dbReference type="Proteomes" id="UP000001174">
    <property type="component" value="Chromosome"/>
</dbReference>
<dbReference type="GO" id="GO:1990904">
    <property type="term" value="C:ribonucleoprotein complex"/>
    <property type="evidence" value="ECO:0007669"/>
    <property type="project" value="UniProtKB-KW"/>
</dbReference>
<dbReference type="GO" id="GO:0005840">
    <property type="term" value="C:ribosome"/>
    <property type="evidence" value="ECO:0007669"/>
    <property type="project" value="UniProtKB-KW"/>
</dbReference>
<dbReference type="GO" id="GO:0019843">
    <property type="term" value="F:rRNA binding"/>
    <property type="evidence" value="ECO:0007669"/>
    <property type="project" value="UniProtKB-UniRule"/>
</dbReference>
<dbReference type="GO" id="GO:0003735">
    <property type="term" value="F:structural constituent of ribosome"/>
    <property type="evidence" value="ECO:0007669"/>
    <property type="project" value="InterPro"/>
</dbReference>
<dbReference type="GO" id="GO:0006412">
    <property type="term" value="P:translation"/>
    <property type="evidence" value="ECO:0007669"/>
    <property type="project" value="UniProtKB-UniRule"/>
</dbReference>
<dbReference type="CDD" id="cd06089">
    <property type="entry name" value="KOW_RPL26"/>
    <property type="match status" value="1"/>
</dbReference>
<dbReference type="FunFam" id="2.30.30.30:FF:000004">
    <property type="entry name" value="50S ribosomal protein L24"/>
    <property type="match status" value="1"/>
</dbReference>
<dbReference type="Gene3D" id="2.30.30.30">
    <property type="match status" value="1"/>
</dbReference>
<dbReference type="HAMAP" id="MF_01326_B">
    <property type="entry name" value="Ribosomal_uL24_B"/>
    <property type="match status" value="1"/>
</dbReference>
<dbReference type="InterPro" id="IPR005824">
    <property type="entry name" value="KOW"/>
</dbReference>
<dbReference type="InterPro" id="IPR014722">
    <property type="entry name" value="Rib_uL2_dom2"/>
</dbReference>
<dbReference type="InterPro" id="IPR003256">
    <property type="entry name" value="Ribosomal_uL24"/>
</dbReference>
<dbReference type="InterPro" id="IPR005825">
    <property type="entry name" value="Ribosomal_uL24_CS"/>
</dbReference>
<dbReference type="InterPro" id="IPR041988">
    <property type="entry name" value="Ribosomal_uL24_KOW"/>
</dbReference>
<dbReference type="InterPro" id="IPR008991">
    <property type="entry name" value="Translation_prot_SH3-like_sf"/>
</dbReference>
<dbReference type="NCBIfam" id="TIGR01079">
    <property type="entry name" value="rplX_bact"/>
    <property type="match status" value="1"/>
</dbReference>
<dbReference type="PANTHER" id="PTHR12903">
    <property type="entry name" value="MITOCHONDRIAL RIBOSOMAL PROTEIN L24"/>
    <property type="match status" value="1"/>
</dbReference>
<dbReference type="Pfam" id="PF00467">
    <property type="entry name" value="KOW"/>
    <property type="match status" value="1"/>
</dbReference>
<dbReference type="Pfam" id="PF17136">
    <property type="entry name" value="ribosomal_L24"/>
    <property type="match status" value="1"/>
</dbReference>
<dbReference type="SUPFAM" id="SSF50104">
    <property type="entry name" value="Translation proteins SH3-like domain"/>
    <property type="match status" value="1"/>
</dbReference>
<dbReference type="PROSITE" id="PS01108">
    <property type="entry name" value="RIBOSOMAL_L24"/>
    <property type="match status" value="1"/>
</dbReference>
<gene>
    <name evidence="1" type="primary">rplX</name>
    <name type="ordered locus">FTT_0336</name>
</gene>
<organism>
    <name type="scientific">Francisella tularensis subsp. tularensis (strain SCHU S4 / Schu 4)</name>
    <dbReference type="NCBI Taxonomy" id="177416"/>
    <lineage>
        <taxon>Bacteria</taxon>
        <taxon>Pseudomonadati</taxon>
        <taxon>Pseudomonadota</taxon>
        <taxon>Gammaproteobacteria</taxon>
        <taxon>Thiotrichales</taxon>
        <taxon>Francisellaceae</taxon>
        <taxon>Francisella</taxon>
    </lineage>
</organism>
<name>RL24_FRATT</name>
<keyword id="KW-1185">Reference proteome</keyword>
<keyword id="KW-0687">Ribonucleoprotein</keyword>
<keyword id="KW-0689">Ribosomal protein</keyword>
<keyword id="KW-0694">RNA-binding</keyword>
<keyword id="KW-0699">rRNA-binding</keyword>